<evidence type="ECO:0000250" key="1"/>
<evidence type="ECO:0000250" key="2">
    <source>
        <dbReference type="UniProtKB" id="P13609"/>
    </source>
</evidence>
<evidence type="ECO:0000255" key="3"/>
<evidence type="ECO:0000256" key="4">
    <source>
        <dbReference type="SAM" id="MobiDB-lite"/>
    </source>
</evidence>
<evidence type="ECO:0000269" key="5">
    <source>
    </source>
</evidence>
<evidence type="ECO:0000269" key="6">
    <source>
    </source>
</evidence>
<evidence type="ECO:0000269" key="7">
    <source>
    </source>
</evidence>
<evidence type="ECO:0000269" key="8">
    <source>
    </source>
</evidence>
<evidence type="ECO:0000269" key="9">
    <source>
    </source>
</evidence>
<evidence type="ECO:0000269" key="10">
    <source>
    </source>
</evidence>
<evidence type="ECO:0000269" key="11">
    <source>
    </source>
</evidence>
<evidence type="ECO:0000269" key="12">
    <source>
    </source>
</evidence>
<evidence type="ECO:0000269" key="13">
    <source>
    </source>
</evidence>
<evidence type="ECO:0000269" key="14">
    <source>
    </source>
</evidence>
<evidence type="ECO:0000269" key="15">
    <source>
    </source>
</evidence>
<evidence type="ECO:0000269" key="16">
    <source>
    </source>
</evidence>
<evidence type="ECO:0000269" key="17">
    <source ref="7"/>
</evidence>
<evidence type="ECO:0000305" key="18"/>
<accession>P10124</accession>
<accession>B2R4L7</accession>
<accession>Q5VW06</accession>
<dbReference type="EMBL" id="J03223">
    <property type="protein sequence ID" value="AAA60179.1"/>
    <property type="molecule type" value="mRNA"/>
</dbReference>
<dbReference type="EMBL" id="X17042">
    <property type="protein sequence ID" value="CAA34900.1"/>
    <property type="molecule type" value="mRNA"/>
</dbReference>
<dbReference type="EMBL" id="M33651">
    <property type="protein sequence ID" value="AAA60322.1"/>
    <property type="molecule type" value="Genomic_DNA"/>
</dbReference>
<dbReference type="EMBL" id="M33649">
    <property type="protein sequence ID" value="AAA60322.1"/>
    <property type="status" value="JOINED"/>
    <property type="molecule type" value="Genomic_DNA"/>
</dbReference>
<dbReference type="EMBL" id="M33650">
    <property type="protein sequence ID" value="AAA60322.1"/>
    <property type="status" value="JOINED"/>
    <property type="molecule type" value="Genomic_DNA"/>
</dbReference>
<dbReference type="EMBL" id="M90058">
    <property type="status" value="NOT_ANNOTATED_CDS"/>
    <property type="molecule type" value="Genomic_DNA"/>
</dbReference>
<dbReference type="EMBL" id="AK311873">
    <property type="protein sequence ID" value="BAG34814.1"/>
    <property type="molecule type" value="mRNA"/>
</dbReference>
<dbReference type="EMBL" id="AL442635">
    <property type="status" value="NOT_ANNOTATED_CDS"/>
    <property type="molecule type" value="Genomic_DNA"/>
</dbReference>
<dbReference type="EMBL" id="CH471083">
    <property type="protein sequence ID" value="EAW54309.1"/>
    <property type="molecule type" value="Genomic_DNA"/>
</dbReference>
<dbReference type="EMBL" id="BC015516">
    <property type="protein sequence ID" value="AAH15516.1"/>
    <property type="molecule type" value="mRNA"/>
</dbReference>
<dbReference type="EMBL" id="X12765">
    <property type="protein sequence ID" value="CAA31255.1"/>
    <property type="molecule type" value="mRNA"/>
</dbReference>
<dbReference type="CCDS" id="CCDS7285.1"/>
<dbReference type="PIR" id="A35183">
    <property type="entry name" value="A28058"/>
</dbReference>
<dbReference type="RefSeq" id="NP_001307982.1">
    <property type="nucleotide sequence ID" value="NM_001321053.2"/>
</dbReference>
<dbReference type="RefSeq" id="NP_001307983.1">
    <property type="nucleotide sequence ID" value="NM_001321054.1"/>
</dbReference>
<dbReference type="RefSeq" id="NP_002718.2">
    <property type="nucleotide sequence ID" value="NM_002727.3"/>
</dbReference>
<dbReference type="RefSeq" id="XP_016871881.1">
    <property type="nucleotide sequence ID" value="XM_017016392.1"/>
</dbReference>
<dbReference type="SMR" id="P10124"/>
<dbReference type="BioGRID" id="111543">
    <property type="interactions" value="14"/>
</dbReference>
<dbReference type="FunCoup" id="P10124">
    <property type="interactions" value="148"/>
</dbReference>
<dbReference type="IntAct" id="P10124">
    <property type="interactions" value="23"/>
</dbReference>
<dbReference type="MINT" id="P10124"/>
<dbReference type="STRING" id="9606.ENSP00000242465"/>
<dbReference type="GlyCosmos" id="P10124">
    <property type="glycosylation" value="8 sites, No reported glycans"/>
</dbReference>
<dbReference type="GlyGen" id="P10124">
    <property type="glycosylation" value="8 sites"/>
</dbReference>
<dbReference type="iPTMnet" id="P10124"/>
<dbReference type="BioMuta" id="SRGN"/>
<dbReference type="DMDM" id="269849659"/>
<dbReference type="jPOST" id="P10124"/>
<dbReference type="MassIVE" id="P10124"/>
<dbReference type="PaxDb" id="9606-ENSP00000242465"/>
<dbReference type="PeptideAtlas" id="P10124"/>
<dbReference type="ProteomicsDB" id="52568"/>
<dbReference type="Antibodypedia" id="609">
    <property type="antibodies" value="232 antibodies from 25 providers"/>
</dbReference>
<dbReference type="DNASU" id="5552"/>
<dbReference type="Ensembl" id="ENST00000242465.4">
    <property type="protein sequence ID" value="ENSP00000242465.3"/>
    <property type="gene ID" value="ENSG00000122862.6"/>
</dbReference>
<dbReference type="Ensembl" id="ENST00000718456.1">
    <property type="protein sequence ID" value="ENSP00000520834.1"/>
    <property type="gene ID" value="ENSG00000122862.6"/>
</dbReference>
<dbReference type="GeneID" id="5552"/>
<dbReference type="KEGG" id="hsa:5552"/>
<dbReference type="MANE-Select" id="ENST00000242465.4">
    <property type="protein sequence ID" value="ENSP00000242465.3"/>
    <property type="RefSeq nucleotide sequence ID" value="NM_002727.4"/>
    <property type="RefSeq protein sequence ID" value="NP_002718.2"/>
</dbReference>
<dbReference type="UCSC" id="uc001joz.4">
    <property type="organism name" value="human"/>
</dbReference>
<dbReference type="AGR" id="HGNC:9361"/>
<dbReference type="CTD" id="5552"/>
<dbReference type="DisGeNET" id="5552"/>
<dbReference type="GeneCards" id="SRGN"/>
<dbReference type="HGNC" id="HGNC:9361">
    <property type="gene designation" value="SRGN"/>
</dbReference>
<dbReference type="HPA" id="ENSG00000122862">
    <property type="expression patterns" value="Tissue enriched (bone)"/>
</dbReference>
<dbReference type="MIM" id="177040">
    <property type="type" value="gene"/>
</dbReference>
<dbReference type="neXtProt" id="NX_P10124"/>
<dbReference type="OpenTargets" id="ENSG00000122862"/>
<dbReference type="PharmGKB" id="PA33733"/>
<dbReference type="VEuPathDB" id="HostDB:ENSG00000122862"/>
<dbReference type="eggNOG" id="ENOG502S72N">
    <property type="taxonomic scope" value="Eukaryota"/>
</dbReference>
<dbReference type="GeneTree" id="ENSGT00390000000885"/>
<dbReference type="HOGENOM" id="CLU_142594_0_0_1"/>
<dbReference type="InParanoid" id="P10124"/>
<dbReference type="OMA" id="QWVRCSP"/>
<dbReference type="OrthoDB" id="9884289at2759"/>
<dbReference type="PAN-GO" id="P10124">
    <property type="GO annotations" value="3 GO annotations based on evolutionary models"/>
</dbReference>
<dbReference type="PhylomeDB" id="P10124"/>
<dbReference type="TreeFam" id="TF336310"/>
<dbReference type="PathwayCommons" id="P10124"/>
<dbReference type="Reactome" id="R-HSA-114608">
    <property type="pathway name" value="Platelet degranulation"/>
</dbReference>
<dbReference type="SignaLink" id="P10124"/>
<dbReference type="BioGRID-ORCS" id="5552">
    <property type="hits" value="4 hits in 1154 CRISPR screens"/>
</dbReference>
<dbReference type="ChiTaRS" id="SRGN">
    <property type="organism name" value="human"/>
</dbReference>
<dbReference type="GeneWiki" id="SRGN"/>
<dbReference type="GenomeRNAi" id="5552"/>
<dbReference type="Pharos" id="P10124">
    <property type="development level" value="Tbio"/>
</dbReference>
<dbReference type="PRO" id="PR:P10124"/>
<dbReference type="Proteomes" id="UP000005640">
    <property type="component" value="Chromosome 10"/>
</dbReference>
<dbReference type="RNAct" id="P10124">
    <property type="molecule type" value="protein"/>
</dbReference>
<dbReference type="Bgee" id="ENSG00000122862">
    <property type="expression patterns" value="Expressed in trabecular bone tissue and 204 other cell types or tissues"/>
</dbReference>
<dbReference type="GO" id="GO:0044194">
    <property type="term" value="C:cytolytic granule"/>
    <property type="evidence" value="ECO:0007669"/>
    <property type="project" value="UniProtKB-SubCell"/>
</dbReference>
<dbReference type="GO" id="GO:0031012">
    <property type="term" value="C:extracellular matrix"/>
    <property type="evidence" value="ECO:0007005"/>
    <property type="project" value="GO_Central"/>
</dbReference>
<dbReference type="GO" id="GO:0005576">
    <property type="term" value="C:extracellular region"/>
    <property type="evidence" value="ECO:0000304"/>
    <property type="project" value="Reactome"/>
</dbReference>
<dbReference type="GO" id="GO:0005615">
    <property type="term" value="C:extracellular space"/>
    <property type="evidence" value="ECO:0000314"/>
    <property type="project" value="UniProtKB"/>
</dbReference>
<dbReference type="GO" id="GO:0005794">
    <property type="term" value="C:Golgi apparatus"/>
    <property type="evidence" value="ECO:0000314"/>
    <property type="project" value="UniProtKB"/>
</dbReference>
<dbReference type="GO" id="GO:0042629">
    <property type="term" value="C:mast cell granule"/>
    <property type="evidence" value="ECO:0000250"/>
    <property type="project" value="UniProtKB"/>
</dbReference>
<dbReference type="GO" id="GO:0031093">
    <property type="term" value="C:platelet alpha granule lumen"/>
    <property type="evidence" value="ECO:0000304"/>
    <property type="project" value="Reactome"/>
</dbReference>
<dbReference type="GO" id="GO:0030141">
    <property type="term" value="C:secretory granule"/>
    <property type="evidence" value="ECO:0000318"/>
    <property type="project" value="GO_Central"/>
</dbReference>
<dbReference type="GO" id="GO:0006915">
    <property type="term" value="P:apoptotic process"/>
    <property type="evidence" value="ECO:0007669"/>
    <property type="project" value="UniProtKB-KW"/>
</dbReference>
<dbReference type="GO" id="GO:0031214">
    <property type="term" value="P:biomineral tissue development"/>
    <property type="evidence" value="ECO:0007669"/>
    <property type="project" value="UniProtKB-KW"/>
</dbReference>
<dbReference type="GO" id="GO:0140507">
    <property type="term" value="P:granzyme-mediated programmed cell death signaling pathway"/>
    <property type="evidence" value="ECO:0000314"/>
    <property type="project" value="GO_Central"/>
</dbReference>
<dbReference type="GO" id="GO:0033382">
    <property type="term" value="P:maintenance of granzyme B location in T cell secretory granule"/>
    <property type="evidence" value="ECO:0000250"/>
    <property type="project" value="UniProtKB"/>
</dbReference>
<dbReference type="GO" id="GO:0033373">
    <property type="term" value="P:maintenance of protease location in mast cell secretory granule"/>
    <property type="evidence" value="ECO:0000250"/>
    <property type="project" value="UniProtKB"/>
</dbReference>
<dbReference type="GO" id="GO:0033364">
    <property type="term" value="P:mast cell secretory granule organization"/>
    <property type="evidence" value="ECO:0000250"/>
    <property type="project" value="UniProtKB"/>
</dbReference>
<dbReference type="GO" id="GO:0030502">
    <property type="term" value="P:negative regulation of bone mineralization"/>
    <property type="evidence" value="ECO:0000314"/>
    <property type="project" value="UniProtKB"/>
</dbReference>
<dbReference type="GO" id="GO:0001818">
    <property type="term" value="P:negative regulation of cytokine production"/>
    <property type="evidence" value="ECO:0000250"/>
    <property type="project" value="UniProtKB"/>
</dbReference>
<dbReference type="GO" id="GO:0016485">
    <property type="term" value="P:protein processing"/>
    <property type="evidence" value="ECO:0000250"/>
    <property type="project" value="UniProtKB"/>
</dbReference>
<dbReference type="GO" id="GO:0033363">
    <property type="term" value="P:secretory granule organization"/>
    <property type="evidence" value="ECO:0000318"/>
    <property type="project" value="GO_Central"/>
</dbReference>
<dbReference type="GO" id="GO:0033371">
    <property type="term" value="P:T cell secretory granule organization"/>
    <property type="evidence" value="ECO:0000250"/>
    <property type="project" value="UniProtKB"/>
</dbReference>
<dbReference type="InterPro" id="IPR007455">
    <property type="entry name" value="Serglycin"/>
</dbReference>
<dbReference type="PANTHER" id="PTHR17178">
    <property type="entry name" value="SECRETORY GRANULE PROTEOGLYCAN CORE PROTEIN"/>
    <property type="match status" value="1"/>
</dbReference>
<dbReference type="PANTHER" id="PTHR17178:SF0">
    <property type="entry name" value="SERGLYCIN"/>
    <property type="match status" value="1"/>
</dbReference>
<dbReference type="Pfam" id="PF04360">
    <property type="entry name" value="Serglycin"/>
    <property type="match status" value="1"/>
</dbReference>
<name>SRGN_HUMAN</name>
<feature type="signal peptide" evidence="15 16">
    <location>
        <begin position="1"/>
        <end position="27"/>
    </location>
</feature>
<feature type="chain" id="PRO_0000026679" description="Serglycin">
    <location>
        <begin position="28"/>
        <end position="158"/>
    </location>
</feature>
<feature type="repeat" description="1">
    <location>
        <begin position="94"/>
        <end position="95"/>
    </location>
</feature>
<feature type="repeat" description="2">
    <location>
        <begin position="96"/>
        <end position="97"/>
    </location>
</feature>
<feature type="repeat" description="3">
    <location>
        <begin position="98"/>
        <end position="99"/>
    </location>
</feature>
<feature type="repeat" description="4">
    <location>
        <begin position="100"/>
        <end position="101"/>
    </location>
</feature>
<feature type="repeat" description="5">
    <location>
        <begin position="102"/>
        <end position="103"/>
    </location>
</feature>
<feature type="repeat" description="6">
    <location>
        <begin position="104"/>
        <end position="105"/>
    </location>
</feature>
<feature type="repeat" description="7">
    <location>
        <begin position="106"/>
        <end position="107"/>
    </location>
</feature>
<feature type="repeat" description="8">
    <location>
        <begin position="108"/>
        <end position="109"/>
    </location>
</feature>
<feature type="repeat" description="9">
    <location>
        <begin position="110"/>
        <end position="111"/>
    </location>
</feature>
<feature type="region of interest" description="9 X 2 AA tandem repeats of [SF]-G">
    <location>
        <begin position="94"/>
        <end position="111"/>
    </location>
</feature>
<feature type="region of interest" description="Disordered" evidence="4">
    <location>
        <begin position="134"/>
        <end position="158"/>
    </location>
</feature>
<feature type="glycosylation site" description="O-linked (Xyl...) (glycosaminoglycan) serine" evidence="16">
    <location>
        <position position="94"/>
    </location>
</feature>
<feature type="glycosylation site" description="O-linked (Xyl...) (glycosaminoglycan) serine" evidence="16">
    <location>
        <position position="96"/>
    </location>
</feature>
<feature type="glycosylation site" description="O-linked (Xyl...) (glycosaminoglycan) serine" evidence="3">
    <location>
        <position position="100"/>
    </location>
</feature>
<feature type="glycosylation site" description="O-linked (Xyl...) (glycosaminoglycan) serine" evidence="3">
    <location>
        <position position="102"/>
    </location>
</feature>
<feature type="glycosylation site" description="O-linked (Xyl...) (glycosaminoglycan) serine" evidence="3">
    <location>
        <position position="104"/>
    </location>
</feature>
<feature type="glycosylation site" description="O-linked (Xyl...) (glycosaminoglycan) serine" evidence="3">
    <location>
        <position position="106"/>
    </location>
</feature>
<feature type="glycosylation site" description="O-linked (Xyl...) (glycosaminoglycan) serine" evidence="3">
    <location>
        <position position="108"/>
    </location>
</feature>
<feature type="glycosylation site" description="O-linked (Xyl...) (glycosaminoglycan) serine" evidence="3">
    <location>
        <position position="110"/>
    </location>
</feature>
<feature type="disulfide bond" evidence="3">
    <location>
        <begin position="40"/>
        <end position="49"/>
    </location>
</feature>
<feature type="sequence variant" id="VAR_032761" description="In dbSNP:rs2229498." evidence="7 9 12 13 14 17">
    <original>R</original>
    <variation>Q</variation>
    <location>
        <position position="31"/>
    </location>
</feature>
<feature type="sequence conflict" description="In Ref. 9; CAA31255." evidence="18" ref="9">
    <original>N</original>
    <variation>S</variation>
    <location>
        <position position="139"/>
    </location>
</feature>
<reference key="1">
    <citation type="journal article" date="1988" name="J. Biol. Chem.">
        <title>Isolation and characterization of a cDNA that encodes the peptide core of the secretory granule proteoglycan of human promyelocytic leukemia HL-60 cells.</title>
        <authorList>
            <person name="Stevens R.L."/>
            <person name="Avraham S."/>
            <person name="Gartner M.C."/>
            <person name="Bruns G.A.P."/>
            <person name="Austen K.F."/>
            <person name="Weis J.H."/>
        </authorList>
    </citation>
    <scope>NUCLEOTIDE SEQUENCE [MRNA]</scope>
    <scope>VARIANT GLN-31</scope>
</reference>
<reference key="2">
    <citation type="journal article" date="1989" name="Nucleic Acids Res.">
        <title>Nucleotide sequence of a cDNA encoding a hemopoietic proteoglycan core protein.</title>
        <authorList>
            <person name="Stellrecht C.M."/>
            <person name="Saunders G.F."/>
        </authorList>
    </citation>
    <scope>NUCLEOTIDE SEQUENCE [MRNA]</scope>
    <scope>VARIANT GLN-31</scope>
</reference>
<reference key="3">
    <citation type="journal article" date="1990" name="J. Biol. Chem.">
        <title>Characterization of the human gene that encodes the peptide core of secretory granule proteoglycans in promyelocytic leukemia HL-60 cells and analysis of the translated product.</title>
        <authorList>
            <person name="Nicodemus C.F."/>
            <person name="Avraham S."/>
            <person name="Austen K.F."/>
            <person name="Purdy S."/>
            <person name="Jablonski J."/>
            <person name="Stevens R.L."/>
        </authorList>
    </citation>
    <scope>NUCLEOTIDE SEQUENCE [GENOMIC DNA]</scope>
    <scope>VARIANT GLN-31</scope>
</reference>
<reference key="4">
    <citation type="journal article" date="1992" name="J. Biol. Chem.">
        <title>The human serglycin gene. Nucleotide sequence and methylation pattern in human promyelocytic leukemia HL-60 cells and T-lymphoblast Molt-4 cells.</title>
        <authorList>
            <person name="Humphries D.E."/>
            <person name="Nicodemus C.F."/>
            <person name="Schiller V."/>
            <person name="Stevens R.L."/>
        </authorList>
    </citation>
    <scope>NUCLEOTIDE SEQUENCE [GENOMIC DNA]</scope>
</reference>
<reference key="5">
    <citation type="journal article" date="2004" name="Nat. Genet.">
        <title>Complete sequencing and characterization of 21,243 full-length human cDNAs.</title>
        <authorList>
            <person name="Ota T."/>
            <person name="Suzuki Y."/>
            <person name="Nishikawa T."/>
            <person name="Otsuki T."/>
            <person name="Sugiyama T."/>
            <person name="Irie R."/>
            <person name="Wakamatsu A."/>
            <person name="Hayashi K."/>
            <person name="Sato H."/>
            <person name="Nagai K."/>
            <person name="Kimura K."/>
            <person name="Makita H."/>
            <person name="Sekine M."/>
            <person name="Obayashi M."/>
            <person name="Nishi T."/>
            <person name="Shibahara T."/>
            <person name="Tanaka T."/>
            <person name="Ishii S."/>
            <person name="Yamamoto J."/>
            <person name="Saito K."/>
            <person name="Kawai Y."/>
            <person name="Isono Y."/>
            <person name="Nakamura Y."/>
            <person name="Nagahari K."/>
            <person name="Murakami K."/>
            <person name="Yasuda T."/>
            <person name="Iwayanagi T."/>
            <person name="Wagatsuma M."/>
            <person name="Shiratori A."/>
            <person name="Sudo H."/>
            <person name="Hosoiri T."/>
            <person name="Kaku Y."/>
            <person name="Kodaira H."/>
            <person name="Kondo H."/>
            <person name="Sugawara M."/>
            <person name="Takahashi M."/>
            <person name="Kanda K."/>
            <person name="Yokoi T."/>
            <person name="Furuya T."/>
            <person name="Kikkawa E."/>
            <person name="Omura Y."/>
            <person name="Abe K."/>
            <person name="Kamihara K."/>
            <person name="Katsuta N."/>
            <person name="Sato K."/>
            <person name="Tanikawa M."/>
            <person name="Yamazaki M."/>
            <person name="Ninomiya K."/>
            <person name="Ishibashi T."/>
            <person name="Yamashita H."/>
            <person name="Murakawa K."/>
            <person name="Fujimori K."/>
            <person name="Tanai H."/>
            <person name="Kimata M."/>
            <person name="Watanabe M."/>
            <person name="Hiraoka S."/>
            <person name="Chiba Y."/>
            <person name="Ishida S."/>
            <person name="Ono Y."/>
            <person name="Takiguchi S."/>
            <person name="Watanabe S."/>
            <person name="Yosida M."/>
            <person name="Hotuta T."/>
            <person name="Kusano J."/>
            <person name="Kanehori K."/>
            <person name="Takahashi-Fujii A."/>
            <person name="Hara H."/>
            <person name="Tanase T.-O."/>
            <person name="Nomura Y."/>
            <person name="Togiya S."/>
            <person name="Komai F."/>
            <person name="Hara R."/>
            <person name="Takeuchi K."/>
            <person name="Arita M."/>
            <person name="Imose N."/>
            <person name="Musashino K."/>
            <person name="Yuuki H."/>
            <person name="Oshima A."/>
            <person name="Sasaki N."/>
            <person name="Aotsuka S."/>
            <person name="Yoshikawa Y."/>
            <person name="Matsunawa H."/>
            <person name="Ichihara T."/>
            <person name="Shiohata N."/>
            <person name="Sano S."/>
            <person name="Moriya S."/>
            <person name="Momiyama H."/>
            <person name="Satoh N."/>
            <person name="Takami S."/>
            <person name="Terashima Y."/>
            <person name="Suzuki O."/>
            <person name="Nakagawa S."/>
            <person name="Senoh A."/>
            <person name="Mizoguchi H."/>
            <person name="Goto Y."/>
            <person name="Shimizu F."/>
            <person name="Wakebe H."/>
            <person name="Hishigaki H."/>
            <person name="Watanabe T."/>
            <person name="Sugiyama A."/>
            <person name="Takemoto M."/>
            <person name="Kawakami B."/>
            <person name="Yamazaki M."/>
            <person name="Watanabe K."/>
            <person name="Kumagai A."/>
            <person name="Itakura S."/>
            <person name="Fukuzumi Y."/>
            <person name="Fujimori Y."/>
            <person name="Komiyama M."/>
            <person name="Tashiro H."/>
            <person name="Tanigami A."/>
            <person name="Fujiwara T."/>
            <person name="Ono T."/>
            <person name="Yamada K."/>
            <person name="Fujii Y."/>
            <person name="Ozaki K."/>
            <person name="Hirao M."/>
            <person name="Ohmori Y."/>
            <person name="Kawabata A."/>
            <person name="Hikiji T."/>
            <person name="Kobatake N."/>
            <person name="Inagaki H."/>
            <person name="Ikema Y."/>
            <person name="Okamoto S."/>
            <person name="Okitani R."/>
            <person name="Kawakami T."/>
            <person name="Noguchi S."/>
            <person name="Itoh T."/>
            <person name="Shigeta K."/>
            <person name="Senba T."/>
            <person name="Matsumura K."/>
            <person name="Nakajima Y."/>
            <person name="Mizuno T."/>
            <person name="Morinaga M."/>
            <person name="Sasaki M."/>
            <person name="Togashi T."/>
            <person name="Oyama M."/>
            <person name="Hata H."/>
            <person name="Watanabe M."/>
            <person name="Komatsu T."/>
            <person name="Mizushima-Sugano J."/>
            <person name="Satoh T."/>
            <person name="Shirai Y."/>
            <person name="Takahashi Y."/>
            <person name="Nakagawa K."/>
            <person name="Okumura K."/>
            <person name="Nagase T."/>
            <person name="Nomura N."/>
            <person name="Kikuchi H."/>
            <person name="Masuho Y."/>
            <person name="Yamashita R."/>
            <person name="Nakai K."/>
            <person name="Yada T."/>
            <person name="Nakamura Y."/>
            <person name="Ohara O."/>
            <person name="Isogai T."/>
            <person name="Sugano S."/>
        </authorList>
    </citation>
    <scope>NUCLEOTIDE SEQUENCE [LARGE SCALE MRNA]</scope>
    <scope>VARIANT GLN-31</scope>
</reference>
<reference key="6">
    <citation type="journal article" date="2004" name="Nature">
        <title>The DNA sequence and comparative analysis of human chromosome 10.</title>
        <authorList>
            <person name="Deloukas P."/>
            <person name="Earthrowl M.E."/>
            <person name="Grafham D.V."/>
            <person name="Rubenfield M."/>
            <person name="French L."/>
            <person name="Steward C.A."/>
            <person name="Sims S.K."/>
            <person name="Jones M.C."/>
            <person name="Searle S."/>
            <person name="Scott C."/>
            <person name="Howe K."/>
            <person name="Hunt S.E."/>
            <person name="Andrews T.D."/>
            <person name="Gilbert J.G.R."/>
            <person name="Swarbreck D."/>
            <person name="Ashurst J.L."/>
            <person name="Taylor A."/>
            <person name="Battles J."/>
            <person name="Bird C.P."/>
            <person name="Ainscough R."/>
            <person name="Almeida J.P."/>
            <person name="Ashwell R.I.S."/>
            <person name="Ambrose K.D."/>
            <person name="Babbage A.K."/>
            <person name="Bagguley C.L."/>
            <person name="Bailey J."/>
            <person name="Banerjee R."/>
            <person name="Bates K."/>
            <person name="Beasley H."/>
            <person name="Bray-Allen S."/>
            <person name="Brown A.J."/>
            <person name="Brown J.Y."/>
            <person name="Burford D.C."/>
            <person name="Burrill W."/>
            <person name="Burton J."/>
            <person name="Cahill P."/>
            <person name="Camire D."/>
            <person name="Carter N.P."/>
            <person name="Chapman J.C."/>
            <person name="Clark S.Y."/>
            <person name="Clarke G."/>
            <person name="Clee C.M."/>
            <person name="Clegg S."/>
            <person name="Corby N."/>
            <person name="Coulson A."/>
            <person name="Dhami P."/>
            <person name="Dutta I."/>
            <person name="Dunn M."/>
            <person name="Faulkner L."/>
            <person name="Frankish A."/>
            <person name="Frankland J.A."/>
            <person name="Garner P."/>
            <person name="Garnett J."/>
            <person name="Gribble S."/>
            <person name="Griffiths C."/>
            <person name="Grocock R."/>
            <person name="Gustafson E."/>
            <person name="Hammond S."/>
            <person name="Harley J.L."/>
            <person name="Hart E."/>
            <person name="Heath P.D."/>
            <person name="Ho T.P."/>
            <person name="Hopkins B."/>
            <person name="Horne J."/>
            <person name="Howden P.J."/>
            <person name="Huckle E."/>
            <person name="Hynds C."/>
            <person name="Johnson C."/>
            <person name="Johnson D."/>
            <person name="Kana A."/>
            <person name="Kay M."/>
            <person name="Kimberley A.M."/>
            <person name="Kershaw J.K."/>
            <person name="Kokkinaki M."/>
            <person name="Laird G.K."/>
            <person name="Lawlor S."/>
            <person name="Lee H.M."/>
            <person name="Leongamornlert D.A."/>
            <person name="Laird G."/>
            <person name="Lloyd C."/>
            <person name="Lloyd D.M."/>
            <person name="Loveland J."/>
            <person name="Lovell J."/>
            <person name="McLaren S."/>
            <person name="McLay K.E."/>
            <person name="McMurray A."/>
            <person name="Mashreghi-Mohammadi M."/>
            <person name="Matthews L."/>
            <person name="Milne S."/>
            <person name="Nickerson T."/>
            <person name="Nguyen M."/>
            <person name="Overton-Larty E."/>
            <person name="Palmer S.A."/>
            <person name="Pearce A.V."/>
            <person name="Peck A.I."/>
            <person name="Pelan S."/>
            <person name="Phillimore B."/>
            <person name="Porter K."/>
            <person name="Rice C.M."/>
            <person name="Rogosin A."/>
            <person name="Ross M.T."/>
            <person name="Sarafidou T."/>
            <person name="Sehra H.K."/>
            <person name="Shownkeen R."/>
            <person name="Skuce C.D."/>
            <person name="Smith M."/>
            <person name="Standring L."/>
            <person name="Sycamore N."/>
            <person name="Tester J."/>
            <person name="Thorpe A."/>
            <person name="Torcasso W."/>
            <person name="Tracey A."/>
            <person name="Tromans A."/>
            <person name="Tsolas J."/>
            <person name="Wall M."/>
            <person name="Walsh J."/>
            <person name="Wang H."/>
            <person name="Weinstock K."/>
            <person name="West A.P."/>
            <person name="Willey D.L."/>
            <person name="Whitehead S.L."/>
            <person name="Wilming L."/>
            <person name="Wray P.W."/>
            <person name="Young L."/>
            <person name="Chen Y."/>
            <person name="Lovering R.C."/>
            <person name="Moschonas N.K."/>
            <person name="Siebert R."/>
            <person name="Fechtel K."/>
            <person name="Bentley D."/>
            <person name="Durbin R.M."/>
            <person name="Hubbard T."/>
            <person name="Doucette-Stamm L."/>
            <person name="Beck S."/>
            <person name="Smith D.R."/>
            <person name="Rogers J."/>
        </authorList>
    </citation>
    <scope>NUCLEOTIDE SEQUENCE [LARGE SCALE GENOMIC DNA]</scope>
</reference>
<reference key="7">
    <citation type="submission" date="2005-07" db="EMBL/GenBank/DDBJ databases">
        <authorList>
            <person name="Mural R.J."/>
            <person name="Istrail S."/>
            <person name="Sutton G.G."/>
            <person name="Florea L."/>
            <person name="Halpern A.L."/>
            <person name="Mobarry C.M."/>
            <person name="Lippert R."/>
            <person name="Walenz B."/>
            <person name="Shatkay H."/>
            <person name="Dew I."/>
            <person name="Miller J.R."/>
            <person name="Flanigan M.J."/>
            <person name="Edwards N.J."/>
            <person name="Bolanos R."/>
            <person name="Fasulo D."/>
            <person name="Halldorsson B.V."/>
            <person name="Hannenhalli S."/>
            <person name="Turner R."/>
            <person name="Yooseph S."/>
            <person name="Lu F."/>
            <person name="Nusskern D.R."/>
            <person name="Shue B.C."/>
            <person name="Zheng X.H."/>
            <person name="Zhong F."/>
            <person name="Delcher A.L."/>
            <person name="Huson D.H."/>
            <person name="Kravitz S.A."/>
            <person name="Mouchard L."/>
            <person name="Reinert K."/>
            <person name="Remington K.A."/>
            <person name="Clark A.G."/>
            <person name="Waterman M.S."/>
            <person name="Eichler E.E."/>
            <person name="Adams M.D."/>
            <person name="Hunkapiller M.W."/>
            <person name="Myers E.W."/>
            <person name="Venter J.C."/>
        </authorList>
    </citation>
    <scope>NUCLEOTIDE SEQUENCE [LARGE SCALE GENOMIC DNA]</scope>
    <scope>VARIANT GLN-31</scope>
</reference>
<reference key="8">
    <citation type="journal article" date="2004" name="Genome Res.">
        <title>The status, quality, and expansion of the NIH full-length cDNA project: the Mammalian Gene Collection (MGC).</title>
        <authorList>
            <consortium name="The MGC Project Team"/>
        </authorList>
    </citation>
    <scope>NUCLEOTIDE SEQUENCE [LARGE SCALE MRNA]</scope>
    <scope>VARIANT GLN-31</scope>
    <source>
        <tissue>Lung</tissue>
    </source>
</reference>
<reference key="9">
    <citation type="journal article" date="1988" name="FEBS Lett.">
        <title>Complete amino acid sequence of a human platelet proteoglycan.</title>
        <authorList>
            <person name="Alliel P.M."/>
            <person name="Perin J.-P."/>
            <person name="Maillet P."/>
            <person name="Bonnet F."/>
            <person name="Rosa J.-P."/>
            <person name="Jolles P."/>
        </authorList>
    </citation>
    <scope>PROTEIN SEQUENCE OF 28-158</scope>
    <scope>NUCLEOTIDE SEQUENCE [MRNA] OF 34-158</scope>
    <scope>GLYCOSYLATION AT SER-94 AND SER-96</scope>
</reference>
<reference key="10">
    <citation type="journal article" date="1988" name="Biochem. J.">
        <title>Characterization and N-terminal sequence of human platelet proteoglycan.</title>
        <authorList>
            <person name="Perin J.-P."/>
            <person name="Bonnet F."/>
            <person name="Maillet P."/>
            <person name="Jolles P."/>
        </authorList>
    </citation>
    <scope>PROTEIN SEQUENCE OF 28-93</scope>
</reference>
<reference key="11">
    <citation type="journal article" date="2001" name="Blood">
        <title>Synthesis, secretion, and subcellular localization of serglycin proteoglycan in human endothelial cells.</title>
        <authorList>
            <person name="Schick B.P."/>
            <person name="Gradowski J.F."/>
            <person name="San Antonio J.D."/>
        </authorList>
    </citation>
    <scope>SUBCELLULAR LOCATION</scope>
</reference>
<reference key="12">
    <citation type="journal article" date="2002" name="Immunity">
        <title>Cytotoxic cell granule-mediated apoptosis: perforin delivers granzyme B-serglycin complexes into target cells without plasma membrane pore formation.</title>
        <authorList>
            <person name="Metkar S.S."/>
            <person name="Wang B."/>
            <person name="Aguilar-Santelises M."/>
            <person name="Raja S.M."/>
            <person name="Uhlin-Hansen L."/>
            <person name="Podack E."/>
            <person name="Trapani J.A."/>
            <person name="Froelich C.J."/>
        </authorList>
    </citation>
    <scope>FUNCTION</scope>
    <scope>INTERACTION WITH GZMB</scope>
</reference>
<reference key="13">
    <citation type="journal article" date="2002" name="J. Biol. Chem.">
        <title>Cytotoxic cell granule-mediated apoptosis. Characterization of the macromolecular complex of granzyme B with serglycin.</title>
        <authorList>
            <person name="Raja S.M."/>
            <person name="Wang B."/>
            <person name="Dantuluri M."/>
            <person name="Desai U.R."/>
            <person name="Demeler B."/>
            <person name="Spiegel K."/>
            <person name="Metkar S.S."/>
            <person name="Froelich C.J."/>
        </authorList>
    </citation>
    <scope>INTERACTION WITH GZMB</scope>
</reference>
<reference key="14">
    <citation type="journal article" date="2004" name="J. Leukoc. Biol.">
        <title>Localization of serglycin in human neutrophil granulocytes and their precursors.</title>
        <authorList>
            <person name="Niemann C.U."/>
            <person name="Cowland J.B."/>
            <person name="Klausen P."/>
            <person name="Askaa J."/>
            <person name="Calafat J."/>
            <person name="Borregaard N."/>
        </authorList>
    </citation>
    <scope>SUBCELLULAR LOCATION</scope>
</reference>
<reference key="15">
    <citation type="journal article" date="2006" name="FEBS J.">
        <title>Secretion of proteases in serglycin transfected Madin-Darby canine kidney cells.</title>
        <authorList>
            <person name="Zernichow L."/>
            <person name="Dalen K.T."/>
            <person name="Prydz K."/>
            <person name="Winberg J.-O."/>
            <person name="Kolset S.O."/>
        </authorList>
    </citation>
    <scope>FUNCTION</scope>
</reference>
<reference key="16">
    <citation type="journal article" date="2006" name="J. Biol. Chem.">
        <title>Serglycin constitutively secreted by myeloma plasma cells is a potent inhibitor of bone mineralization in vitro.</title>
        <authorList>
            <person name="Theocharis A.D."/>
            <person name="Seidel C."/>
            <person name="Borset M."/>
            <person name="Dobra K."/>
            <person name="Baykov V."/>
            <person name="Labropoulou V."/>
            <person name="Kanakis I."/>
            <person name="Dalas E."/>
            <person name="Karamanos N.K."/>
            <person name="Sundan A."/>
            <person name="Hjerpe A."/>
        </authorList>
    </citation>
    <scope>FUNCTION</scope>
    <scope>SUBCELLULAR LOCATION</scope>
</reference>
<keyword id="KW-0053">Apoptosis</keyword>
<keyword id="KW-0091">Biomineralization</keyword>
<keyword id="KW-0903">Direct protein sequencing</keyword>
<keyword id="KW-1015">Disulfide bond</keyword>
<keyword id="KW-0325">Glycoprotein</keyword>
<keyword id="KW-0333">Golgi apparatus</keyword>
<keyword id="KW-0458">Lysosome</keyword>
<keyword id="KW-0654">Proteoglycan</keyword>
<keyword id="KW-1267">Proteomics identification</keyword>
<keyword id="KW-1185">Reference proteome</keyword>
<keyword id="KW-0677">Repeat</keyword>
<keyword id="KW-0964">Secreted</keyword>
<keyword id="KW-0732">Signal</keyword>
<organism>
    <name type="scientific">Homo sapiens</name>
    <name type="common">Human</name>
    <dbReference type="NCBI Taxonomy" id="9606"/>
    <lineage>
        <taxon>Eukaryota</taxon>
        <taxon>Metazoa</taxon>
        <taxon>Chordata</taxon>
        <taxon>Craniata</taxon>
        <taxon>Vertebrata</taxon>
        <taxon>Euteleostomi</taxon>
        <taxon>Mammalia</taxon>
        <taxon>Eutheria</taxon>
        <taxon>Euarchontoglires</taxon>
        <taxon>Primates</taxon>
        <taxon>Haplorrhini</taxon>
        <taxon>Catarrhini</taxon>
        <taxon>Hominidae</taxon>
        <taxon>Homo</taxon>
    </lineage>
</organism>
<proteinExistence type="evidence at protein level"/>
<gene>
    <name type="primary">SRGN</name>
    <name type="synonym">PRG</name>
    <name type="synonym">PRG1</name>
</gene>
<protein>
    <recommendedName>
        <fullName>Serglycin</fullName>
    </recommendedName>
    <alternativeName>
        <fullName>Hematopoietic proteoglycan core protein</fullName>
    </alternativeName>
    <alternativeName>
        <fullName>Platelet proteoglycan core protein</fullName>
        <shortName>P.PG</shortName>
    </alternativeName>
    <alternativeName>
        <fullName>Secretory granule proteoglycan core protein</fullName>
    </alternativeName>
</protein>
<comment type="function">
    <text evidence="6 10 11">Plays a role in formation of mast cell secretory granules and mediates storage of various compounds in secretory vesicles. Required for storage of some proteases in both connective tissue and mucosal mast cells and for storage of granzyme B in T-lymphocytes. Plays a role in localizing neutrophil elastase in azurophil granules of neutrophils. Mediates processing of MMP2. Plays a role in cytotoxic cell granule-mediated apoptosis by forming a complex with granzyme B which is delivered to cells by perforin to induce apoptosis. Regulates the secretion of TNF-alpha and may also regulate protease secretion. Inhibits bone mineralization.</text>
</comment>
<comment type="subunit">
    <text>Binds to activated CD44 and to GZMB.</text>
</comment>
<comment type="interaction">
    <interactant intactId="EBI-744915">
        <id>P10124</id>
    </interactant>
    <interactant intactId="EBI-2505785">
        <id>P10144</id>
        <label>GZMB</label>
    </interactant>
    <organismsDiffer>false</organismsDiffer>
    <experiments>2</experiments>
</comment>
<comment type="interaction">
    <interactant intactId="EBI-744915">
        <id>P10124</id>
    </interactant>
    <interactant intactId="EBI-5325353">
        <id>P11226</id>
        <label>MBL2</label>
    </interactant>
    <organismsDiffer>false</organismsDiffer>
    <experiments>4</experiments>
</comment>
<comment type="interaction">
    <interactant intactId="EBI-744915">
        <id>P10124</id>
    </interactant>
    <interactant intactId="EBI-749635">
        <id>P61601</id>
        <label>NCALD</label>
    </interactant>
    <organismsDiffer>false</organismsDiffer>
    <experiments>3</experiments>
</comment>
<comment type="interaction">
    <interactant intactId="EBI-744915">
        <id>P10124</id>
    </interactant>
    <interactant intactId="EBI-594836">
        <id>O00623</id>
        <label>PEX12</label>
    </interactant>
    <organismsDiffer>false</organismsDiffer>
    <experiments>3</experiments>
</comment>
<comment type="interaction">
    <interactant intactId="EBI-744915">
        <id>P10124</id>
    </interactant>
    <interactant intactId="EBI-347996">
        <id>O43765</id>
        <label>SGTA</label>
    </interactant>
    <organismsDiffer>false</organismsDiffer>
    <experiments>10</experiments>
</comment>
<comment type="interaction">
    <interactant intactId="EBI-744915">
        <id>P10124</id>
    </interactant>
    <interactant intactId="EBI-744081">
        <id>Q96EQ0</id>
        <label>SGTB</label>
    </interactant>
    <organismsDiffer>false</organismsDiffer>
    <experiments>3</experiments>
</comment>
<comment type="interaction">
    <interactant intactId="EBI-744915">
        <id>P10124</id>
    </interactant>
    <interactant intactId="EBI-741480">
        <id>Q9UMX0</id>
        <label>UBQLN1</label>
    </interactant>
    <organismsDiffer>false</organismsDiffer>
    <experiments>6</experiments>
</comment>
<comment type="interaction">
    <interactant intactId="EBI-744915">
        <id>P10124</id>
    </interactant>
    <interactant intactId="EBI-10173939">
        <id>Q9UMX0-2</id>
        <label>UBQLN1</label>
    </interactant>
    <organismsDiffer>false</organismsDiffer>
    <experiments>3</experiments>
</comment>
<comment type="interaction">
    <interactant intactId="EBI-744915">
        <id>P10124</id>
    </interactant>
    <interactant intactId="EBI-947187">
        <id>Q9UHD9</id>
        <label>UBQLN2</label>
    </interactant>
    <organismsDiffer>false</organismsDiffer>
    <experiments>3</experiments>
</comment>
<comment type="subcellular location">
    <subcellularLocation>
        <location evidence="5">Cytoplasmic granule</location>
    </subcellularLocation>
    <subcellularLocation>
        <location evidence="5">Cytolytic granule</location>
    </subcellularLocation>
    <subcellularLocation>
        <location evidence="5 11">Secreted</location>
        <location evidence="5 11">Extracellular space</location>
    </subcellularLocation>
    <subcellularLocation>
        <location evidence="5 8">Golgi apparatus</location>
    </subcellularLocation>
    <text evidence="2 5 8">Found in mast cell granules and in cytoplasmic granules of cytolytic T lymphocytes from where it is secreted upon cell activation (By similarity). Secreted constitutively by endothelial cells and macrophages (PubMed:11154222). Located to Golgi apparatus during neutrophil differentiation (PubMed:15136585).</text>
</comment>
<comment type="induction">
    <text>By Epstein-Barr virus (EBV).</text>
</comment>
<comment type="PTM">
    <text evidence="1">O-glycosylated; contains chondroitin sulfate and heparan sulfate.</text>
</comment>
<comment type="similarity">
    <text evidence="18">Belongs to the serglycin family.</text>
</comment>
<sequence>MMQKLLKCSRLVLALALILVLESSVQGYPTRRARYQWVRCNPDSNSANCLEEKGPMFELLPGESNKIPRLRTDLFPKTRIQDLNRIFPLSEDYSGSGFGSGSGSGSGSGSGFLTEMEQDYQLVDESDAFHDNLRSLDRNLPSDSQDLGQHGLEEDFML</sequence>